<name>FABG_BUCAP</name>
<protein>
    <recommendedName>
        <fullName>3-oxoacyl-[acyl-carrier-protein] reductase FabG</fullName>
        <ecNumber>1.1.1.100</ecNumber>
    </recommendedName>
    <alternativeName>
        <fullName>3-ketoacyl-acyl carrier protein reductase</fullName>
    </alternativeName>
    <alternativeName>
        <fullName>Beta-Ketoacyl-acyl carrier protein reductase</fullName>
    </alternativeName>
    <alternativeName>
        <fullName>Beta-ketoacyl-ACP reductase</fullName>
    </alternativeName>
</protein>
<feature type="chain" id="PRO_0000054667" description="3-oxoacyl-[acyl-carrier-protein] reductase FabG">
    <location>
        <begin position="1"/>
        <end position="244"/>
    </location>
</feature>
<feature type="active site" description="Proton acceptor" evidence="2">
    <location>
        <position position="151"/>
    </location>
</feature>
<feature type="binding site" evidence="1">
    <location>
        <begin position="12"/>
        <end position="15"/>
    </location>
    <ligand>
        <name>NADP(+)</name>
        <dbReference type="ChEBI" id="CHEBI:58349"/>
    </ligand>
</feature>
<feature type="binding site" evidence="1">
    <location>
        <position position="37"/>
    </location>
    <ligand>
        <name>NADP(+)</name>
        <dbReference type="ChEBI" id="CHEBI:58349"/>
    </ligand>
</feature>
<feature type="binding site" evidence="1">
    <location>
        <position position="50"/>
    </location>
    <ligand>
        <name>Ca(2+)</name>
        <dbReference type="ChEBI" id="CHEBI:29108"/>
        <label>1</label>
        <note>ligand shared between dimeric partners</note>
    </ligand>
</feature>
<feature type="binding site" evidence="1">
    <location>
        <position position="53"/>
    </location>
    <ligand>
        <name>Ca(2+)</name>
        <dbReference type="ChEBI" id="CHEBI:29108"/>
        <label>1</label>
        <note>ligand shared between dimeric partners</note>
    </ligand>
</feature>
<feature type="binding site" evidence="1">
    <location>
        <begin position="59"/>
        <end position="60"/>
    </location>
    <ligand>
        <name>NADP(+)</name>
        <dbReference type="ChEBI" id="CHEBI:58349"/>
    </ligand>
</feature>
<feature type="binding site" evidence="1">
    <location>
        <position position="86"/>
    </location>
    <ligand>
        <name>NADP(+)</name>
        <dbReference type="ChEBI" id="CHEBI:58349"/>
    </ligand>
</feature>
<feature type="binding site" evidence="1">
    <location>
        <position position="138"/>
    </location>
    <ligand>
        <name>substrate</name>
    </ligand>
</feature>
<feature type="binding site" evidence="1">
    <location>
        <position position="145"/>
    </location>
    <ligand>
        <name>Ca(2+)</name>
        <dbReference type="ChEBI" id="CHEBI:29108"/>
        <label>2</label>
    </ligand>
</feature>
<feature type="binding site" evidence="1">
    <location>
        <begin position="151"/>
        <end position="155"/>
    </location>
    <ligand>
        <name>NADP(+)</name>
        <dbReference type="ChEBI" id="CHEBI:58349"/>
    </ligand>
</feature>
<feature type="binding site" evidence="1">
    <location>
        <position position="184"/>
    </location>
    <ligand>
        <name>NADP(+)</name>
        <dbReference type="ChEBI" id="CHEBI:58349"/>
    </ligand>
</feature>
<feature type="binding site" evidence="1">
    <location>
        <position position="233"/>
    </location>
    <ligand>
        <name>Ca(2+)</name>
        <dbReference type="ChEBI" id="CHEBI:29108"/>
        <label>3</label>
        <note>ligand shared between dimeric partners</note>
    </ligand>
</feature>
<feature type="binding site" evidence="1">
    <location>
        <position position="234"/>
    </location>
    <ligand>
        <name>Ca(2+)</name>
        <dbReference type="ChEBI" id="CHEBI:29108"/>
        <label>3</label>
        <note>ligand shared between dimeric partners</note>
    </ligand>
</feature>
<gene>
    <name type="primary">fabG</name>
    <name type="ordered locus">BUsg_339</name>
</gene>
<proteinExistence type="inferred from homology"/>
<evidence type="ECO:0000250" key="1"/>
<evidence type="ECO:0000255" key="2">
    <source>
        <dbReference type="PROSITE-ProRule" id="PRU10001"/>
    </source>
</evidence>
<evidence type="ECO:0000305" key="3"/>
<accession>Q8K9J5</accession>
<dbReference type="EC" id="1.1.1.100"/>
<dbReference type="EMBL" id="AE013218">
    <property type="protein sequence ID" value="AAM67893.1"/>
    <property type="molecule type" value="Genomic_DNA"/>
</dbReference>
<dbReference type="RefSeq" id="WP_011053860.1">
    <property type="nucleotide sequence ID" value="NC_004061.1"/>
</dbReference>
<dbReference type="SMR" id="Q8K9J5"/>
<dbReference type="STRING" id="198804.BUsg_339"/>
<dbReference type="GeneID" id="93003810"/>
<dbReference type="KEGG" id="bas:BUsg_339"/>
<dbReference type="eggNOG" id="COG1028">
    <property type="taxonomic scope" value="Bacteria"/>
</dbReference>
<dbReference type="HOGENOM" id="CLU_010194_1_3_6"/>
<dbReference type="UniPathway" id="UPA00094"/>
<dbReference type="Proteomes" id="UP000000416">
    <property type="component" value="Chromosome"/>
</dbReference>
<dbReference type="GO" id="GO:0004316">
    <property type="term" value="F:3-oxoacyl-[acyl-carrier-protein] reductase (NADPH) activity"/>
    <property type="evidence" value="ECO:0007669"/>
    <property type="project" value="UniProtKB-EC"/>
</dbReference>
<dbReference type="GO" id="GO:0046872">
    <property type="term" value="F:metal ion binding"/>
    <property type="evidence" value="ECO:0007669"/>
    <property type="project" value="UniProtKB-KW"/>
</dbReference>
<dbReference type="GO" id="GO:0051287">
    <property type="term" value="F:NAD binding"/>
    <property type="evidence" value="ECO:0007669"/>
    <property type="project" value="InterPro"/>
</dbReference>
<dbReference type="GO" id="GO:0006633">
    <property type="term" value="P:fatty acid biosynthetic process"/>
    <property type="evidence" value="ECO:0007669"/>
    <property type="project" value="UniProtKB-UniPathway"/>
</dbReference>
<dbReference type="CDD" id="cd05333">
    <property type="entry name" value="BKR_SDR_c"/>
    <property type="match status" value="1"/>
</dbReference>
<dbReference type="FunFam" id="3.40.50.720:FF:000173">
    <property type="entry name" value="3-oxoacyl-[acyl-carrier protein] reductase"/>
    <property type="match status" value="1"/>
</dbReference>
<dbReference type="Gene3D" id="3.40.50.720">
    <property type="entry name" value="NAD(P)-binding Rossmann-like Domain"/>
    <property type="match status" value="1"/>
</dbReference>
<dbReference type="InterPro" id="IPR011284">
    <property type="entry name" value="3oxo_ACP_reduc"/>
</dbReference>
<dbReference type="InterPro" id="IPR036291">
    <property type="entry name" value="NAD(P)-bd_dom_sf"/>
</dbReference>
<dbReference type="InterPro" id="IPR020904">
    <property type="entry name" value="Sc_DH/Rdtase_CS"/>
</dbReference>
<dbReference type="InterPro" id="IPR050259">
    <property type="entry name" value="SDR"/>
</dbReference>
<dbReference type="InterPro" id="IPR002347">
    <property type="entry name" value="SDR_fam"/>
</dbReference>
<dbReference type="NCBIfam" id="TIGR01830">
    <property type="entry name" value="3oxo_ACP_reduc"/>
    <property type="match status" value="1"/>
</dbReference>
<dbReference type="NCBIfam" id="NF009466">
    <property type="entry name" value="PRK12826.1-2"/>
    <property type="match status" value="1"/>
</dbReference>
<dbReference type="PANTHER" id="PTHR42879">
    <property type="entry name" value="3-OXOACYL-(ACYL-CARRIER-PROTEIN) REDUCTASE"/>
    <property type="match status" value="1"/>
</dbReference>
<dbReference type="PANTHER" id="PTHR42879:SF2">
    <property type="entry name" value="3-OXOACYL-[ACYL-CARRIER-PROTEIN] REDUCTASE FABG"/>
    <property type="match status" value="1"/>
</dbReference>
<dbReference type="Pfam" id="PF13561">
    <property type="entry name" value="adh_short_C2"/>
    <property type="match status" value="1"/>
</dbReference>
<dbReference type="PRINTS" id="PR00081">
    <property type="entry name" value="GDHRDH"/>
</dbReference>
<dbReference type="PRINTS" id="PR00080">
    <property type="entry name" value="SDRFAMILY"/>
</dbReference>
<dbReference type="SUPFAM" id="SSF51735">
    <property type="entry name" value="NAD(P)-binding Rossmann-fold domains"/>
    <property type="match status" value="1"/>
</dbReference>
<dbReference type="PROSITE" id="PS00061">
    <property type="entry name" value="ADH_SHORT"/>
    <property type="match status" value="1"/>
</dbReference>
<organism>
    <name type="scientific">Buchnera aphidicola subsp. Schizaphis graminum (strain Sg)</name>
    <dbReference type="NCBI Taxonomy" id="198804"/>
    <lineage>
        <taxon>Bacteria</taxon>
        <taxon>Pseudomonadati</taxon>
        <taxon>Pseudomonadota</taxon>
        <taxon>Gammaproteobacteria</taxon>
        <taxon>Enterobacterales</taxon>
        <taxon>Erwiniaceae</taxon>
        <taxon>Buchnera</taxon>
    </lineage>
</organism>
<comment type="function">
    <text evidence="1">Catalyzes the NADPH-dependent reduction of beta-ketoacyl-ACP substrates to beta-hydroxyacyl-ACP products, the first reductive step in the elongation cycle of fatty acid biosynthesis.</text>
</comment>
<comment type="catalytic activity">
    <reaction>
        <text>a (3R)-hydroxyacyl-[ACP] + NADP(+) = a 3-oxoacyl-[ACP] + NADPH + H(+)</text>
        <dbReference type="Rhea" id="RHEA:17397"/>
        <dbReference type="Rhea" id="RHEA-COMP:9916"/>
        <dbReference type="Rhea" id="RHEA-COMP:9945"/>
        <dbReference type="ChEBI" id="CHEBI:15378"/>
        <dbReference type="ChEBI" id="CHEBI:57783"/>
        <dbReference type="ChEBI" id="CHEBI:58349"/>
        <dbReference type="ChEBI" id="CHEBI:78776"/>
        <dbReference type="ChEBI" id="CHEBI:78827"/>
        <dbReference type="EC" id="1.1.1.100"/>
    </reaction>
</comment>
<comment type="pathway">
    <text>Lipid metabolism; fatty acid biosynthesis.</text>
</comment>
<comment type="subunit">
    <text evidence="1">Homotetramer.</text>
</comment>
<comment type="miscellaneous">
    <text evidence="1">Calcium ions stabilize the structure, and may inhibit FabG activity by obstructing access to the active site.</text>
</comment>
<comment type="similarity">
    <text evidence="3">Belongs to the short-chain dehydrogenases/reductases (SDR) family.</text>
</comment>
<sequence>MKIEKKTALVTGANQGLGKEIAIKLSQKGIQVIGTSTTVDGVKTINKYLKKNGFGFILDLKDTDSILEKMKEICQKKYSIDILINNAGITSDNLLVYMSNKEWENVIKINLTSVFYMSKSVIRSMIKKRYGRIVTIGSVIGYLGNRGQINYSASKSGLIGFHKSLALEVAQKGITVNIVSPGFIKTNLTKNLNVFQYKKHLSKIPMKRIGTAEEIANAVIFLSSEKASYITGQTIHVNGGMYMT</sequence>
<keyword id="KW-0106">Calcium</keyword>
<keyword id="KW-0275">Fatty acid biosynthesis</keyword>
<keyword id="KW-0276">Fatty acid metabolism</keyword>
<keyword id="KW-0444">Lipid biosynthesis</keyword>
<keyword id="KW-0443">Lipid metabolism</keyword>
<keyword id="KW-0479">Metal-binding</keyword>
<keyword id="KW-0521">NADP</keyword>
<keyword id="KW-0560">Oxidoreductase</keyword>
<reference key="1">
    <citation type="journal article" date="2002" name="Science">
        <title>50 million years of genomic stasis in endosymbiotic bacteria.</title>
        <authorList>
            <person name="Tamas I."/>
            <person name="Klasson L."/>
            <person name="Canbaeck B."/>
            <person name="Naeslund A.K."/>
            <person name="Eriksson A.-S."/>
            <person name="Wernegreen J.J."/>
            <person name="Sandstroem J.P."/>
            <person name="Moran N.A."/>
            <person name="Andersson S.G.E."/>
        </authorList>
    </citation>
    <scope>NUCLEOTIDE SEQUENCE [LARGE SCALE GENOMIC DNA]</scope>
    <source>
        <strain>Sg</strain>
    </source>
</reference>